<gene>
    <name type="primary">rtcB</name>
    <name type="ordered locus">Rv2631</name>
    <name type="ORF">MTCY441.01</name>
</gene>
<keyword id="KW-0342">GTP-binding</keyword>
<keyword id="KW-0436">Ligase</keyword>
<keyword id="KW-0464">Manganese</keyword>
<keyword id="KW-0479">Metal-binding</keyword>
<keyword id="KW-0547">Nucleotide-binding</keyword>
<keyword id="KW-1185">Reference proteome</keyword>
<keyword id="KW-0692">RNA repair</keyword>
<comment type="function">
    <text evidence="2">GTP-dependent RNA ligase that is involved RNA repair. Joins RNA with 2',3'-cyclic-phosphate or 3'-phosphate ends to RNA with 5'-hydroxy ends.</text>
</comment>
<comment type="catalytic activity">
    <reaction evidence="2">
        <text>a 3'-end 3'-phospho-ribonucleotide-RNA + a 5'-end dephospho-ribonucleoside-RNA + GTP = a ribonucleotidyl-ribonucleotide-RNA + GMP + diphosphate</text>
        <dbReference type="Rhea" id="RHEA:68076"/>
        <dbReference type="Rhea" id="RHEA-COMP:10463"/>
        <dbReference type="Rhea" id="RHEA-COMP:13936"/>
        <dbReference type="Rhea" id="RHEA-COMP:17355"/>
        <dbReference type="ChEBI" id="CHEBI:33019"/>
        <dbReference type="ChEBI" id="CHEBI:37565"/>
        <dbReference type="ChEBI" id="CHEBI:58115"/>
        <dbReference type="ChEBI" id="CHEBI:83062"/>
        <dbReference type="ChEBI" id="CHEBI:138284"/>
        <dbReference type="ChEBI" id="CHEBI:173118"/>
        <dbReference type="EC" id="6.5.1.8"/>
    </reaction>
</comment>
<comment type="catalytic activity">
    <reaction evidence="2">
        <text>a 3'-end 2',3'-cyclophospho-ribonucleotide-RNA + a 5'-end dephospho-ribonucleoside-RNA + GTP + H2O = a ribonucleotidyl-ribonucleotide-RNA + GMP + diphosphate + H(+)</text>
        <dbReference type="Rhea" id="RHEA:68080"/>
        <dbReference type="Rhea" id="RHEA-COMP:10464"/>
        <dbReference type="Rhea" id="RHEA-COMP:13936"/>
        <dbReference type="Rhea" id="RHEA-COMP:17355"/>
        <dbReference type="ChEBI" id="CHEBI:15377"/>
        <dbReference type="ChEBI" id="CHEBI:15378"/>
        <dbReference type="ChEBI" id="CHEBI:33019"/>
        <dbReference type="ChEBI" id="CHEBI:37565"/>
        <dbReference type="ChEBI" id="CHEBI:58115"/>
        <dbReference type="ChEBI" id="CHEBI:83064"/>
        <dbReference type="ChEBI" id="CHEBI:138284"/>
        <dbReference type="ChEBI" id="CHEBI:173118"/>
        <dbReference type="EC" id="6.5.1.8"/>
    </reaction>
</comment>
<comment type="cofactor">
    <cofactor evidence="1">
        <name>Mn(2+)</name>
        <dbReference type="ChEBI" id="CHEBI:29035"/>
    </cofactor>
    <text evidence="1">Binds 2 manganese ions per subunit.</text>
</comment>
<comment type="subunit">
    <text evidence="2">Monomer.</text>
</comment>
<comment type="induction">
    <text evidence="3 4 5">A member of the dormancy regulon. Induced in response to reduced oxygen tension (hypoxia), low levels of nitric oxide (NO) and carbon monoxide (CO). It is hoped that this regulon will give insight into the latent, or dormant phase of infection.</text>
</comment>
<comment type="miscellaneous">
    <text evidence="2">Ligation proceeds through 3 nucleotidyl transfer steps, with 2',3'-cyclic phosphate termini being hydrolyzed to 3'-P termini in a step that precedes 3'-P activation with GMP. In the first nucleotidyl transfer step, RtcB reacts with GTP to form a covalent RtcB-histidine-GMP intermediate with release of PPi; in the second step, the GMP moiety is transferred to the RNA 3'-P; in the third step, the 5'-OH from the opposite RNA strand attacks the activated 3'-P to form a 3',5'-phosphodiester bond and release GMP.</text>
</comment>
<comment type="similarity">
    <text evidence="6">Belongs to the RtcB family.</text>
</comment>
<proteinExistence type="evidence at transcript level"/>
<sequence length="432" mass="45528">MQVVNVATLPGIVRASYAMPDVHWGYGFPIGGVAATDVDNDGVVSPGGVGFDISCGVRLLVGEGLDREELQPRLPAVMDRLDRAIPRGVGTAGVWRLPDRNTLQEVLTGGARFAVEQGHGVALDLERCEDGGVMTGADAAKISDRALQRGLGQIGSLGSGNHFLEVQAVDRVYDPVAAAPMGLAEGTVCVMIHTGSRGLGHQICTDHVRQMEQAMGRYGIAVPDRQLACVPVHSPDGQAYLAAMAAAANYGRANRQLLTEATRRVFADATGTPLDLLYDVSHNLAKIETHPIDGQLRSVCVHRKGATRSLPPHHHELPAELAAVGQPVLIPGTMGTASYVLAGVTGNPAFFSTAHGAGRVLSRHQAARHTSGEAIRASLAKRGIIVRGTSRRGIAEEKPEAYKDVDEVIEASHQSGLARKVARLVPLGCVKG</sequence>
<feature type="chain" id="PRO_0000215111" description="RNA-splicing ligase RtcB">
    <location>
        <begin position="1"/>
        <end position="432"/>
    </location>
</feature>
<feature type="active site" description="GMP-histidine intermediate" evidence="1">
    <location>
        <position position="355"/>
    </location>
</feature>
<feature type="binding site" evidence="1">
    <location>
        <position position="52"/>
    </location>
    <ligand>
        <name>Mn(2+)</name>
        <dbReference type="ChEBI" id="CHEBI:29035"/>
        <label>1</label>
    </ligand>
</feature>
<feature type="binding site" evidence="1">
    <location>
        <position position="55"/>
    </location>
    <ligand>
        <name>Mn(2+)</name>
        <dbReference type="ChEBI" id="CHEBI:29035"/>
        <label>1</label>
    </ligand>
</feature>
<feature type="binding site" evidence="1">
    <location>
        <position position="55"/>
    </location>
    <ligand>
        <name>Mn(2+)</name>
        <dbReference type="ChEBI" id="CHEBI:29035"/>
        <label>2</label>
    </ligand>
</feature>
<feature type="binding site" evidence="1">
    <location>
        <begin position="161"/>
        <end position="165"/>
    </location>
    <ligand>
        <name>GMP</name>
        <dbReference type="ChEBI" id="CHEBI:58115"/>
    </ligand>
</feature>
<feature type="binding site" evidence="1">
    <location>
        <position position="162"/>
    </location>
    <ligand>
        <name>Mn(2+)</name>
        <dbReference type="ChEBI" id="CHEBI:29035"/>
        <label>1</label>
    </ligand>
</feature>
<feature type="binding site" evidence="1">
    <location>
        <position position="193"/>
    </location>
    <ligand>
        <name>Mn(2+)</name>
        <dbReference type="ChEBI" id="CHEBI:29035"/>
        <label>2</label>
    </ligand>
</feature>
<feature type="binding site" evidence="1">
    <location>
        <begin position="282"/>
        <end position="283"/>
    </location>
    <ligand>
        <name>GMP</name>
        <dbReference type="ChEBI" id="CHEBI:58115"/>
    </ligand>
</feature>
<feature type="binding site" evidence="1">
    <location>
        <position position="282"/>
    </location>
    <ligand>
        <name>Mn(2+)</name>
        <dbReference type="ChEBI" id="CHEBI:29035"/>
        <label>2</label>
    </ligand>
</feature>
<feature type="binding site" evidence="1">
    <location>
        <begin position="331"/>
        <end position="334"/>
    </location>
    <ligand>
        <name>GMP</name>
        <dbReference type="ChEBI" id="CHEBI:58115"/>
    </ligand>
</feature>
<feature type="binding site" evidence="1">
    <location>
        <position position="338"/>
    </location>
    <ligand>
        <name>GMP</name>
        <dbReference type="ChEBI" id="CHEBI:58115"/>
    </ligand>
</feature>
<feature type="binding site" evidence="1">
    <location>
        <begin position="355"/>
        <end position="358"/>
    </location>
    <ligand>
        <name>GMP</name>
        <dbReference type="ChEBI" id="CHEBI:58115"/>
    </ligand>
</feature>
<feature type="binding site" evidence="1">
    <location>
        <position position="431"/>
    </location>
    <ligand>
        <name>GMP</name>
        <dbReference type="ChEBI" id="CHEBI:58115"/>
    </ligand>
</feature>
<evidence type="ECO:0000250" key="1">
    <source>
        <dbReference type="UniProtKB" id="O59245"/>
    </source>
</evidence>
<evidence type="ECO:0000250" key="2">
    <source>
        <dbReference type="UniProtKB" id="P46850"/>
    </source>
</evidence>
<evidence type="ECO:0000269" key="3">
    <source>
    </source>
</evidence>
<evidence type="ECO:0000269" key="4">
    <source>
    </source>
</evidence>
<evidence type="ECO:0000269" key="5">
    <source>
    </source>
</evidence>
<evidence type="ECO:0000305" key="6"/>
<name>RTCB_MYCTU</name>
<dbReference type="EC" id="6.5.1.8" evidence="2"/>
<dbReference type="EMBL" id="AL123456">
    <property type="protein sequence ID" value="CCP45429.1"/>
    <property type="molecule type" value="Genomic_DNA"/>
</dbReference>
<dbReference type="PIR" id="C70963">
    <property type="entry name" value="C70963"/>
</dbReference>
<dbReference type="RefSeq" id="NP_217147.2">
    <property type="nucleotide sequence ID" value="NC_000962.3"/>
</dbReference>
<dbReference type="RefSeq" id="WP_003413616.1">
    <property type="nucleotide sequence ID" value="NC_000962.3"/>
</dbReference>
<dbReference type="SMR" id="P9WGW5"/>
<dbReference type="FunCoup" id="P9WGW5">
    <property type="interactions" value="304"/>
</dbReference>
<dbReference type="STRING" id="83332.Rv2631"/>
<dbReference type="PaxDb" id="83332-Rv2631"/>
<dbReference type="DNASU" id="887431"/>
<dbReference type="GeneID" id="887431"/>
<dbReference type="KEGG" id="mtu:Rv2631"/>
<dbReference type="KEGG" id="mtv:RVBD_2631"/>
<dbReference type="TubercuList" id="Rv2631"/>
<dbReference type="eggNOG" id="COG1690">
    <property type="taxonomic scope" value="Bacteria"/>
</dbReference>
<dbReference type="InParanoid" id="P9WGW5"/>
<dbReference type="OrthoDB" id="9802323at2"/>
<dbReference type="PhylomeDB" id="P9WGW5"/>
<dbReference type="Proteomes" id="UP000001584">
    <property type="component" value="Chromosome"/>
</dbReference>
<dbReference type="GO" id="GO:0005576">
    <property type="term" value="C:extracellular region"/>
    <property type="evidence" value="ECO:0007005"/>
    <property type="project" value="MTBBASE"/>
</dbReference>
<dbReference type="GO" id="GO:0009274">
    <property type="term" value="C:peptidoglycan-based cell wall"/>
    <property type="evidence" value="ECO:0007005"/>
    <property type="project" value="MTBBASE"/>
</dbReference>
<dbReference type="GO" id="GO:0005525">
    <property type="term" value="F:GTP binding"/>
    <property type="evidence" value="ECO:0007669"/>
    <property type="project" value="UniProtKB-KW"/>
</dbReference>
<dbReference type="GO" id="GO:0046872">
    <property type="term" value="F:metal ion binding"/>
    <property type="evidence" value="ECO:0007669"/>
    <property type="project" value="UniProtKB-KW"/>
</dbReference>
<dbReference type="GO" id="GO:0170057">
    <property type="term" value="F:RNA ligase (GTP) activity"/>
    <property type="evidence" value="ECO:0007669"/>
    <property type="project" value="UniProtKB-EC"/>
</dbReference>
<dbReference type="GO" id="GO:0042245">
    <property type="term" value="P:RNA repair"/>
    <property type="evidence" value="ECO:0007669"/>
    <property type="project" value="UniProtKB-KW"/>
</dbReference>
<dbReference type="GO" id="GO:0006388">
    <property type="term" value="P:tRNA splicing, via endonucleolytic cleavage and ligation"/>
    <property type="evidence" value="ECO:0000318"/>
    <property type="project" value="GO_Central"/>
</dbReference>
<dbReference type="FunFam" id="3.90.1860.10:FF:000001">
    <property type="entry name" value="tRNA-splicing ligase RtcB homolog"/>
    <property type="match status" value="1"/>
</dbReference>
<dbReference type="Gene3D" id="3.90.1860.10">
    <property type="entry name" value="tRNA-splicing ligase RtcB"/>
    <property type="match status" value="1"/>
</dbReference>
<dbReference type="InterPro" id="IPR001233">
    <property type="entry name" value="RtcB"/>
</dbReference>
<dbReference type="InterPro" id="IPR036025">
    <property type="entry name" value="RtcB-like_sf"/>
</dbReference>
<dbReference type="PANTHER" id="PTHR11118">
    <property type="entry name" value="RNA-SPLICING LIGASE RTCB HOMOLOG"/>
    <property type="match status" value="1"/>
</dbReference>
<dbReference type="PANTHER" id="PTHR11118:SF1">
    <property type="entry name" value="RNA-SPLICING LIGASE RTCB HOMOLOG"/>
    <property type="match status" value="1"/>
</dbReference>
<dbReference type="Pfam" id="PF01139">
    <property type="entry name" value="RtcB"/>
    <property type="match status" value="1"/>
</dbReference>
<dbReference type="SUPFAM" id="SSF103365">
    <property type="entry name" value="Hypothetical protein PH1602"/>
    <property type="match status" value="1"/>
</dbReference>
<dbReference type="PROSITE" id="PS01288">
    <property type="entry name" value="UPF0027"/>
    <property type="match status" value="1"/>
</dbReference>
<reference key="1">
    <citation type="journal article" date="1998" name="Nature">
        <title>Deciphering the biology of Mycobacterium tuberculosis from the complete genome sequence.</title>
        <authorList>
            <person name="Cole S.T."/>
            <person name="Brosch R."/>
            <person name="Parkhill J."/>
            <person name="Garnier T."/>
            <person name="Churcher C.M."/>
            <person name="Harris D.E."/>
            <person name="Gordon S.V."/>
            <person name="Eiglmeier K."/>
            <person name="Gas S."/>
            <person name="Barry C.E. III"/>
            <person name="Tekaia F."/>
            <person name="Badcock K."/>
            <person name="Basham D."/>
            <person name="Brown D."/>
            <person name="Chillingworth T."/>
            <person name="Connor R."/>
            <person name="Davies R.M."/>
            <person name="Devlin K."/>
            <person name="Feltwell T."/>
            <person name="Gentles S."/>
            <person name="Hamlin N."/>
            <person name="Holroyd S."/>
            <person name="Hornsby T."/>
            <person name="Jagels K."/>
            <person name="Krogh A."/>
            <person name="McLean J."/>
            <person name="Moule S."/>
            <person name="Murphy L.D."/>
            <person name="Oliver S."/>
            <person name="Osborne J."/>
            <person name="Quail M.A."/>
            <person name="Rajandream M.A."/>
            <person name="Rogers J."/>
            <person name="Rutter S."/>
            <person name="Seeger K."/>
            <person name="Skelton S."/>
            <person name="Squares S."/>
            <person name="Squares R."/>
            <person name="Sulston J.E."/>
            <person name="Taylor K."/>
            <person name="Whitehead S."/>
            <person name="Barrell B.G."/>
        </authorList>
    </citation>
    <scope>NUCLEOTIDE SEQUENCE [LARGE SCALE GENOMIC DNA]</scope>
    <source>
        <strain>ATCC 25618 / H37Rv</strain>
    </source>
</reference>
<reference key="2">
    <citation type="journal article" date="2002" name="Microbiology">
        <title>Re-annotation of the genome sequence of Mycobacterium tuberculosis H37Rv.</title>
        <authorList>
            <person name="Camus J.-C."/>
            <person name="Pryor M.J."/>
            <person name="Medigue C."/>
            <person name="Cole S.T."/>
        </authorList>
    </citation>
    <scope>SEQUENCE REVISION</scope>
</reference>
<reference key="3">
    <citation type="journal article" date="2003" name="J. Exp. Med.">
        <title>Inhibition of respiration by nitric oxide induces a Mycobacterium tuberculosis dormancy program.</title>
        <authorList>
            <person name="Voskuil M.I."/>
            <person name="Schnappinger D."/>
            <person name="Visconti K.C."/>
            <person name="Harrell M.I."/>
            <person name="Dolganov G.M."/>
            <person name="Sherman D.R."/>
            <person name="Schoolnik G.K."/>
        </authorList>
    </citation>
    <scope>INDUCTION BY NITRIC OXIDE (NO) AND BY HYPOXIA</scope>
    <scope>DORMANCY REGULON</scope>
    <source>
        <strain>ATCC 25618 / H37Rv</strain>
    </source>
</reference>
<reference key="4">
    <citation type="journal article" date="2008" name="Cell Host Microbe">
        <title>Mycobacterium tuberculosis senses host-derived carbon monoxide during macrophage infection.</title>
        <authorList>
            <person name="Shiloh M.U."/>
            <person name="Manzanillo P."/>
            <person name="Cox J.S."/>
        </authorList>
    </citation>
    <scope>INDUCTION BY CARBON MONOXIDE (CO)</scope>
    <source>
        <strain>ATCC 35801 / TMC 107 / Erdman</strain>
    </source>
</reference>
<reference key="5">
    <citation type="journal article" date="2008" name="J. Biol. Chem.">
        <title>Heme oxygenase-1-derived carbon monoxide induces the Mycobacterium tuberculosis dormancy regulon.</title>
        <authorList>
            <person name="Kumar A."/>
            <person name="Deshane J.S."/>
            <person name="Crossman D.K."/>
            <person name="Bolisetty S."/>
            <person name="Yan B.S."/>
            <person name="Kramnik I."/>
            <person name="Agarwal A."/>
            <person name="Steyn A.J."/>
        </authorList>
    </citation>
    <scope>INDUCTION BY CARBON MONOXIDE (CO)</scope>
    <scope>DORMANCY REGULON</scope>
    <source>
        <strain>ATCC 25618 / H37Rv</strain>
    </source>
</reference>
<protein>
    <recommendedName>
        <fullName evidence="2">RNA-splicing ligase RtcB</fullName>
        <ecNumber evidence="2">6.5.1.8</ecNumber>
    </recommendedName>
    <alternativeName>
        <fullName evidence="2">3'-phosphate/5'-hydroxy nucleic acid ligase</fullName>
    </alternativeName>
</protein>
<organism>
    <name type="scientific">Mycobacterium tuberculosis (strain ATCC 25618 / H37Rv)</name>
    <dbReference type="NCBI Taxonomy" id="83332"/>
    <lineage>
        <taxon>Bacteria</taxon>
        <taxon>Bacillati</taxon>
        <taxon>Actinomycetota</taxon>
        <taxon>Actinomycetes</taxon>
        <taxon>Mycobacteriales</taxon>
        <taxon>Mycobacteriaceae</taxon>
        <taxon>Mycobacterium</taxon>
        <taxon>Mycobacterium tuberculosis complex</taxon>
    </lineage>
</organism>
<accession>P9WGW5</accession>
<accession>L0TBU1</accession>
<accession>P71930</accession>